<proteinExistence type="inferred from homology"/>
<sequence>MNLQQQLAYCQQHQQRLQLRHFDNETAWQLGEKIKRQAEKQGVALAIDITVNHQTLFSYAMAGTCAENQDWLRRKRNVVELLSTSSYAAGLMLQQRETSLDARYGVSLRDYAALGGAFPLQIKQAGIIGSVNVSGAPHLDDHNLLLQVLADFVGLPTGSIELLTPLTPLSA</sequence>
<comment type="similarity">
    <text evidence="1">Belongs to the UPF0303 family.</text>
</comment>
<protein>
    <recommendedName>
        <fullName evidence="1">UPF0303 protein YpAngola_A1792</fullName>
    </recommendedName>
</protein>
<name>Y1792_YERPG</name>
<evidence type="ECO:0000255" key="1">
    <source>
        <dbReference type="HAMAP-Rule" id="MF_00761"/>
    </source>
</evidence>
<feature type="chain" id="PRO_1000198329" description="UPF0303 protein YpAngola_A1792">
    <location>
        <begin position="1"/>
        <end position="171"/>
    </location>
</feature>
<gene>
    <name type="ordered locus">YpAngola_A1792</name>
</gene>
<organism>
    <name type="scientific">Yersinia pestis bv. Antiqua (strain Angola)</name>
    <dbReference type="NCBI Taxonomy" id="349746"/>
    <lineage>
        <taxon>Bacteria</taxon>
        <taxon>Pseudomonadati</taxon>
        <taxon>Pseudomonadota</taxon>
        <taxon>Gammaproteobacteria</taxon>
        <taxon>Enterobacterales</taxon>
        <taxon>Yersiniaceae</taxon>
        <taxon>Yersinia</taxon>
    </lineage>
</organism>
<dbReference type="EMBL" id="CP000901">
    <property type="protein sequence ID" value="ABX87906.1"/>
    <property type="molecule type" value="Genomic_DNA"/>
</dbReference>
<dbReference type="RefSeq" id="WP_002210255.1">
    <property type="nucleotide sequence ID" value="NZ_CP009935.1"/>
</dbReference>
<dbReference type="SMR" id="A9R6J7"/>
<dbReference type="KEGG" id="ypg:YpAngola_A1792"/>
<dbReference type="PATRIC" id="fig|349746.12.peg.2767"/>
<dbReference type="FunFam" id="3.30.450.150:FF:000003">
    <property type="entry name" value="UPF0303 protein YPTS_2661"/>
    <property type="match status" value="1"/>
</dbReference>
<dbReference type="Gene3D" id="3.30.450.150">
    <property type="entry name" value="Haem-degrading domain"/>
    <property type="match status" value="1"/>
</dbReference>
<dbReference type="HAMAP" id="MF_00761">
    <property type="entry name" value="UPF0303"/>
    <property type="match status" value="1"/>
</dbReference>
<dbReference type="InterPro" id="IPR005624">
    <property type="entry name" value="PduO/GlcC-like"/>
</dbReference>
<dbReference type="InterPro" id="IPR038084">
    <property type="entry name" value="PduO/GlcC-like_sf"/>
</dbReference>
<dbReference type="InterPro" id="IPR010371">
    <property type="entry name" value="YBR137W-like"/>
</dbReference>
<dbReference type="NCBIfam" id="NF002694">
    <property type="entry name" value="PRK02487.1-3"/>
    <property type="match status" value="1"/>
</dbReference>
<dbReference type="NCBIfam" id="NF002696">
    <property type="entry name" value="PRK02487.1-5"/>
    <property type="match status" value="1"/>
</dbReference>
<dbReference type="PANTHER" id="PTHR28255">
    <property type="match status" value="1"/>
</dbReference>
<dbReference type="PANTHER" id="PTHR28255:SF1">
    <property type="entry name" value="UPF0303 PROTEIN YBR137W"/>
    <property type="match status" value="1"/>
</dbReference>
<dbReference type="Pfam" id="PF03928">
    <property type="entry name" value="HbpS-like"/>
    <property type="match status" value="1"/>
</dbReference>
<dbReference type="PIRSF" id="PIRSF008757">
    <property type="entry name" value="UCP008757"/>
    <property type="match status" value="1"/>
</dbReference>
<dbReference type="SUPFAM" id="SSF143744">
    <property type="entry name" value="GlcG-like"/>
    <property type="match status" value="1"/>
</dbReference>
<accession>A9R6J7</accession>
<reference key="1">
    <citation type="journal article" date="2010" name="J. Bacteriol.">
        <title>Genome sequence of the deep-rooted Yersinia pestis strain Angola reveals new insights into the evolution and pangenome of the plague bacterium.</title>
        <authorList>
            <person name="Eppinger M."/>
            <person name="Worsham P.L."/>
            <person name="Nikolich M.P."/>
            <person name="Riley D.R."/>
            <person name="Sebastian Y."/>
            <person name="Mou S."/>
            <person name="Achtman M."/>
            <person name="Lindler L.E."/>
            <person name="Ravel J."/>
        </authorList>
    </citation>
    <scope>NUCLEOTIDE SEQUENCE [LARGE SCALE GENOMIC DNA]</scope>
    <source>
        <strain>Angola</strain>
    </source>
</reference>